<evidence type="ECO:0000255" key="1">
    <source>
        <dbReference type="HAMAP-Rule" id="MF_01690"/>
    </source>
</evidence>
<feature type="chain" id="PRO_0000375716" description="Succinyl-diaminopimelate desuccinylase">
    <location>
        <begin position="1"/>
        <end position="375"/>
    </location>
</feature>
<feature type="active site" evidence="1">
    <location>
        <position position="68"/>
    </location>
</feature>
<feature type="active site" description="Proton acceptor" evidence="1">
    <location>
        <position position="133"/>
    </location>
</feature>
<feature type="binding site" evidence="1">
    <location>
        <position position="66"/>
    </location>
    <ligand>
        <name>Zn(2+)</name>
        <dbReference type="ChEBI" id="CHEBI:29105"/>
        <label>1</label>
    </ligand>
</feature>
<feature type="binding site" evidence="1">
    <location>
        <position position="99"/>
    </location>
    <ligand>
        <name>Zn(2+)</name>
        <dbReference type="ChEBI" id="CHEBI:29105"/>
        <label>1</label>
    </ligand>
</feature>
<feature type="binding site" evidence="1">
    <location>
        <position position="99"/>
    </location>
    <ligand>
        <name>Zn(2+)</name>
        <dbReference type="ChEBI" id="CHEBI:29105"/>
        <label>2</label>
    </ligand>
</feature>
<feature type="binding site" evidence="1">
    <location>
        <position position="134"/>
    </location>
    <ligand>
        <name>Zn(2+)</name>
        <dbReference type="ChEBI" id="CHEBI:29105"/>
        <label>2</label>
    </ligand>
</feature>
<feature type="binding site" evidence="1">
    <location>
        <position position="162"/>
    </location>
    <ligand>
        <name>Zn(2+)</name>
        <dbReference type="ChEBI" id="CHEBI:29105"/>
        <label>1</label>
    </ligand>
</feature>
<feature type="binding site" evidence="1">
    <location>
        <position position="348"/>
    </location>
    <ligand>
        <name>Zn(2+)</name>
        <dbReference type="ChEBI" id="CHEBI:29105"/>
        <label>2</label>
    </ligand>
</feature>
<protein>
    <recommendedName>
        <fullName evidence="1">Succinyl-diaminopimelate desuccinylase</fullName>
        <shortName evidence="1">SDAP desuccinylase</shortName>
        <ecNumber evidence="1">3.5.1.18</ecNumber>
    </recommendedName>
    <alternativeName>
        <fullName evidence="1">N-succinyl-LL-2,6-diaminoheptanedioate amidohydrolase</fullName>
    </alternativeName>
</protein>
<keyword id="KW-0028">Amino-acid biosynthesis</keyword>
<keyword id="KW-0170">Cobalt</keyword>
<keyword id="KW-0220">Diaminopimelate biosynthesis</keyword>
<keyword id="KW-0378">Hydrolase</keyword>
<keyword id="KW-0457">Lysine biosynthesis</keyword>
<keyword id="KW-0479">Metal-binding</keyword>
<keyword id="KW-0862">Zinc</keyword>
<gene>
    <name evidence="1" type="primary">dapE</name>
    <name type="ordered locus">SeHA_C2742</name>
</gene>
<reference key="1">
    <citation type="journal article" date="2011" name="J. Bacteriol.">
        <title>Comparative genomics of 28 Salmonella enterica isolates: evidence for CRISPR-mediated adaptive sublineage evolution.</title>
        <authorList>
            <person name="Fricke W.F."/>
            <person name="Mammel M.K."/>
            <person name="McDermott P.F."/>
            <person name="Tartera C."/>
            <person name="White D.G."/>
            <person name="Leclerc J.E."/>
            <person name="Ravel J."/>
            <person name="Cebula T.A."/>
        </authorList>
    </citation>
    <scope>NUCLEOTIDE SEQUENCE [LARGE SCALE GENOMIC DNA]</scope>
    <source>
        <strain>SL476</strain>
    </source>
</reference>
<proteinExistence type="inferred from homology"/>
<accession>B4TD58</accession>
<organism>
    <name type="scientific">Salmonella heidelberg (strain SL476)</name>
    <dbReference type="NCBI Taxonomy" id="454169"/>
    <lineage>
        <taxon>Bacteria</taxon>
        <taxon>Pseudomonadati</taxon>
        <taxon>Pseudomonadota</taxon>
        <taxon>Gammaproteobacteria</taxon>
        <taxon>Enterobacterales</taxon>
        <taxon>Enterobacteriaceae</taxon>
        <taxon>Salmonella</taxon>
    </lineage>
</organism>
<dbReference type="EC" id="3.5.1.18" evidence="1"/>
<dbReference type="EMBL" id="CP001120">
    <property type="protein sequence ID" value="ACF69140.1"/>
    <property type="molecule type" value="Genomic_DNA"/>
</dbReference>
<dbReference type="RefSeq" id="WP_001277825.1">
    <property type="nucleotide sequence ID" value="NC_011083.1"/>
</dbReference>
<dbReference type="SMR" id="B4TD58"/>
<dbReference type="MEROPS" id="M20.010"/>
<dbReference type="KEGG" id="seh:SeHA_C2742"/>
<dbReference type="HOGENOM" id="CLU_021802_4_0_6"/>
<dbReference type="UniPathway" id="UPA00034">
    <property type="reaction ID" value="UER00021"/>
</dbReference>
<dbReference type="Proteomes" id="UP000001866">
    <property type="component" value="Chromosome"/>
</dbReference>
<dbReference type="GO" id="GO:0008777">
    <property type="term" value="F:acetylornithine deacetylase activity"/>
    <property type="evidence" value="ECO:0007669"/>
    <property type="project" value="TreeGrafter"/>
</dbReference>
<dbReference type="GO" id="GO:0050897">
    <property type="term" value="F:cobalt ion binding"/>
    <property type="evidence" value="ECO:0007669"/>
    <property type="project" value="UniProtKB-UniRule"/>
</dbReference>
<dbReference type="GO" id="GO:0009014">
    <property type="term" value="F:succinyl-diaminopimelate desuccinylase activity"/>
    <property type="evidence" value="ECO:0007669"/>
    <property type="project" value="UniProtKB-UniRule"/>
</dbReference>
<dbReference type="GO" id="GO:0008270">
    <property type="term" value="F:zinc ion binding"/>
    <property type="evidence" value="ECO:0007669"/>
    <property type="project" value="UniProtKB-UniRule"/>
</dbReference>
<dbReference type="GO" id="GO:0019877">
    <property type="term" value="P:diaminopimelate biosynthetic process"/>
    <property type="evidence" value="ECO:0007669"/>
    <property type="project" value="UniProtKB-UniRule"/>
</dbReference>
<dbReference type="GO" id="GO:0006526">
    <property type="term" value="P:L-arginine biosynthetic process"/>
    <property type="evidence" value="ECO:0007669"/>
    <property type="project" value="TreeGrafter"/>
</dbReference>
<dbReference type="GO" id="GO:0009089">
    <property type="term" value="P:lysine biosynthetic process via diaminopimelate"/>
    <property type="evidence" value="ECO:0007669"/>
    <property type="project" value="UniProtKB-UniRule"/>
</dbReference>
<dbReference type="CDD" id="cd03891">
    <property type="entry name" value="M20_DapE_proteobac"/>
    <property type="match status" value="1"/>
</dbReference>
<dbReference type="FunFam" id="3.30.70.360:FF:000011">
    <property type="entry name" value="Succinyl-diaminopimelate desuccinylase"/>
    <property type="match status" value="1"/>
</dbReference>
<dbReference type="FunFam" id="3.40.630.10:FF:000005">
    <property type="entry name" value="Succinyl-diaminopimelate desuccinylase"/>
    <property type="match status" value="1"/>
</dbReference>
<dbReference type="FunFam" id="3.40.630.10:FF:000010">
    <property type="entry name" value="Succinyl-diaminopimelate desuccinylase"/>
    <property type="match status" value="1"/>
</dbReference>
<dbReference type="Gene3D" id="3.40.630.10">
    <property type="entry name" value="Zn peptidases"/>
    <property type="match status" value="2"/>
</dbReference>
<dbReference type="HAMAP" id="MF_01690">
    <property type="entry name" value="DapE"/>
    <property type="match status" value="1"/>
</dbReference>
<dbReference type="InterPro" id="IPR001261">
    <property type="entry name" value="ArgE/DapE_CS"/>
</dbReference>
<dbReference type="InterPro" id="IPR036264">
    <property type="entry name" value="Bact_exopeptidase_dim_dom"/>
</dbReference>
<dbReference type="InterPro" id="IPR005941">
    <property type="entry name" value="DapE_proteobac"/>
</dbReference>
<dbReference type="InterPro" id="IPR002933">
    <property type="entry name" value="Peptidase_M20"/>
</dbReference>
<dbReference type="InterPro" id="IPR011650">
    <property type="entry name" value="Peptidase_M20_dimer"/>
</dbReference>
<dbReference type="InterPro" id="IPR050072">
    <property type="entry name" value="Peptidase_M20A"/>
</dbReference>
<dbReference type="NCBIfam" id="TIGR01246">
    <property type="entry name" value="dapE_proteo"/>
    <property type="match status" value="1"/>
</dbReference>
<dbReference type="NCBIfam" id="NF009557">
    <property type="entry name" value="PRK13009.1"/>
    <property type="match status" value="1"/>
</dbReference>
<dbReference type="PANTHER" id="PTHR43808">
    <property type="entry name" value="ACETYLORNITHINE DEACETYLASE"/>
    <property type="match status" value="1"/>
</dbReference>
<dbReference type="PANTHER" id="PTHR43808:SF31">
    <property type="entry name" value="N-ACETYL-L-CITRULLINE DEACETYLASE"/>
    <property type="match status" value="1"/>
</dbReference>
<dbReference type="Pfam" id="PF07687">
    <property type="entry name" value="M20_dimer"/>
    <property type="match status" value="1"/>
</dbReference>
<dbReference type="Pfam" id="PF01546">
    <property type="entry name" value="Peptidase_M20"/>
    <property type="match status" value="1"/>
</dbReference>
<dbReference type="SUPFAM" id="SSF55031">
    <property type="entry name" value="Bacterial exopeptidase dimerisation domain"/>
    <property type="match status" value="1"/>
</dbReference>
<dbReference type="SUPFAM" id="SSF53187">
    <property type="entry name" value="Zn-dependent exopeptidases"/>
    <property type="match status" value="1"/>
</dbReference>
<dbReference type="PROSITE" id="PS00758">
    <property type="entry name" value="ARGE_DAPE_CPG2_1"/>
    <property type="match status" value="1"/>
</dbReference>
<dbReference type="PROSITE" id="PS00759">
    <property type="entry name" value="ARGE_DAPE_CPG2_2"/>
    <property type="match status" value="1"/>
</dbReference>
<comment type="function">
    <text evidence="1">Catalyzes the hydrolysis of N-succinyl-L,L-diaminopimelic acid (SDAP), forming succinate and LL-2,6-diaminopimelate (DAP), an intermediate involved in the bacterial biosynthesis of lysine and meso-diaminopimelic acid, an essential component of bacterial cell walls.</text>
</comment>
<comment type="catalytic activity">
    <reaction evidence="1">
        <text>N-succinyl-(2S,6S)-2,6-diaminopimelate + H2O = (2S,6S)-2,6-diaminopimelate + succinate</text>
        <dbReference type="Rhea" id="RHEA:22608"/>
        <dbReference type="ChEBI" id="CHEBI:15377"/>
        <dbReference type="ChEBI" id="CHEBI:30031"/>
        <dbReference type="ChEBI" id="CHEBI:57609"/>
        <dbReference type="ChEBI" id="CHEBI:58087"/>
        <dbReference type="EC" id="3.5.1.18"/>
    </reaction>
</comment>
<comment type="cofactor">
    <cofactor evidence="1">
        <name>Zn(2+)</name>
        <dbReference type="ChEBI" id="CHEBI:29105"/>
    </cofactor>
    <cofactor evidence="1">
        <name>Co(2+)</name>
        <dbReference type="ChEBI" id="CHEBI:48828"/>
    </cofactor>
    <text evidence="1">Binds 2 Zn(2+) or Co(2+) ions per subunit.</text>
</comment>
<comment type="pathway">
    <text evidence="1">Amino-acid biosynthesis; L-lysine biosynthesis via DAP pathway; LL-2,6-diaminopimelate from (S)-tetrahydrodipicolinate (succinylase route): step 3/3.</text>
</comment>
<comment type="subunit">
    <text evidence="1">Homodimer.</text>
</comment>
<comment type="similarity">
    <text evidence="1">Belongs to the peptidase M20A family. DapE subfamily.</text>
</comment>
<sequence length="375" mass="41578">MSCPVIELTQQLIRRPSLSPDDAGCQALMIERLRKIGFTIEHMDFGDTQNFWAWRGRGETLAFAGHTDVVPAGDVDRWINPPFEPTIRDGMLFGRGAADMKGSLAAMVVAAERFVAQHPHHRGRLAFLITSDEEASAKNGTVKVVEALMARNERLDYCLVGEPSSTEIVGDVVKNGRRGSLTCNLTIHGVQGHVAYPHLADNPVHRAAPFLNELVAIEWDRGNDFFPATSMQVANIQAGTGSNNVIPGELFVQFNFRFSTELTDEMIKERVHALLEKHQLRYTVDWWLSGQPFLTARGKLVDAVVNAIEHYNEIKPQLLTTGGTSDGRFIARMGAQVVELGPVNATIHKINECVNAADLQLLARMYQRIMEQLVA</sequence>
<name>DAPE_SALHS</name>